<comment type="function">
    <text evidence="1">Acts as a GTPase-activating protein (GAP) for tubulin in concert with tubulin-specific chaperone C, but does not enhance tubulin heterodimerization. Acts as a GTPase-activating protein. May act as guanine nucleotide dissociation inhibitor towards ADP-ribosylation factor-like proteins (By similarity).</text>
</comment>
<comment type="subcellular location">
    <subcellularLocation>
        <location evidence="2">Cell membrane</location>
        <topology evidence="2">Lipid-anchor</topology>
        <orientation evidence="2">Cytoplasmic side</orientation>
    </subcellularLocation>
    <text evidence="2">Detected predominantly at the plasma membrane of rod and cone photoreceptors. Not detected in the nucleus.</text>
</comment>
<comment type="PTM">
    <text evidence="6">Myristoylated on Gly-2; which may be required for membrane targeting.</text>
</comment>
<comment type="PTM">
    <text evidence="6">Palmitoylated on Cys-3; which may be required for plasma membrane targeting.</text>
</comment>
<comment type="similarity">
    <text evidence="6">Belongs to the TBCC family.</text>
</comment>
<dbReference type="EMBL" id="AJ721100">
    <property type="protein sequence ID" value="CAG32759.1"/>
    <property type="molecule type" value="mRNA"/>
</dbReference>
<dbReference type="RefSeq" id="NP_001008680.1">
    <property type="nucleotide sequence ID" value="NM_001008680.1"/>
</dbReference>
<dbReference type="SMR" id="Q5ZHN4"/>
<dbReference type="FunCoup" id="Q5ZHN4">
    <property type="interactions" value="150"/>
</dbReference>
<dbReference type="STRING" id="9031.ENSGALP00000026942"/>
<dbReference type="PaxDb" id="9031-ENSGALP00000026942"/>
<dbReference type="GeneID" id="418675"/>
<dbReference type="KEGG" id="gga:418675"/>
<dbReference type="CTD" id="6102"/>
<dbReference type="VEuPathDB" id="HostDB:geneid_418675"/>
<dbReference type="eggNOG" id="KOG2512">
    <property type="taxonomic scope" value="Eukaryota"/>
</dbReference>
<dbReference type="HOGENOM" id="CLU_056119_0_0_1"/>
<dbReference type="InParanoid" id="Q5ZHN4"/>
<dbReference type="OrthoDB" id="194775at2759"/>
<dbReference type="PhylomeDB" id="Q5ZHN4"/>
<dbReference type="TreeFam" id="TF105832"/>
<dbReference type="Reactome" id="R-GGA-5624138">
    <property type="pathway name" value="Trafficking of myristoylated proteins to the cilium"/>
</dbReference>
<dbReference type="PRO" id="PR:Q5ZHN4"/>
<dbReference type="Proteomes" id="UP000000539">
    <property type="component" value="Chromosome 1"/>
</dbReference>
<dbReference type="Bgee" id="ENSGALG00000016728">
    <property type="expression patterns" value="Expressed in granulocyte and 14 other cell types or tissues"/>
</dbReference>
<dbReference type="GO" id="GO:0005929">
    <property type="term" value="C:cilium"/>
    <property type="evidence" value="ECO:0000318"/>
    <property type="project" value="GO_Central"/>
</dbReference>
<dbReference type="GO" id="GO:0005737">
    <property type="term" value="C:cytoplasm"/>
    <property type="evidence" value="ECO:0000250"/>
    <property type="project" value="UniProtKB"/>
</dbReference>
<dbReference type="GO" id="GO:1990075">
    <property type="term" value="C:periciliary membrane compartment"/>
    <property type="evidence" value="ECO:0000318"/>
    <property type="project" value="GO_Central"/>
</dbReference>
<dbReference type="GO" id="GO:0005886">
    <property type="term" value="C:plasma membrane"/>
    <property type="evidence" value="ECO:0000250"/>
    <property type="project" value="UniProtKB"/>
</dbReference>
<dbReference type="GO" id="GO:0005525">
    <property type="term" value="F:GTP binding"/>
    <property type="evidence" value="ECO:0007669"/>
    <property type="project" value="UniProtKB-KW"/>
</dbReference>
<dbReference type="GO" id="GO:0005096">
    <property type="term" value="F:GTPase activator activity"/>
    <property type="evidence" value="ECO:0000250"/>
    <property type="project" value="UniProtKB"/>
</dbReference>
<dbReference type="GO" id="GO:0006892">
    <property type="term" value="P:post-Golgi vesicle-mediated transport"/>
    <property type="evidence" value="ECO:0000318"/>
    <property type="project" value="GO_Central"/>
</dbReference>
<dbReference type="FunFam" id="2.160.20.70:FF:000004">
    <property type="entry name" value="Protein XRP2"/>
    <property type="match status" value="1"/>
</dbReference>
<dbReference type="FunFam" id="3.30.70.141:FF:000007">
    <property type="entry name" value="Protein XRP2"/>
    <property type="match status" value="1"/>
</dbReference>
<dbReference type="Gene3D" id="2.160.20.70">
    <property type="match status" value="1"/>
</dbReference>
<dbReference type="Gene3D" id="3.30.70.141">
    <property type="entry name" value="Nucleoside diphosphate kinase-like domain"/>
    <property type="match status" value="1"/>
</dbReference>
<dbReference type="InterPro" id="IPR017901">
    <property type="entry name" value="C-CAP_CF_C-like"/>
</dbReference>
<dbReference type="InterPro" id="IPR016098">
    <property type="entry name" value="CAP/MinC_C"/>
</dbReference>
<dbReference type="InterPro" id="IPR036223">
    <property type="entry name" value="CAP_C_sf"/>
</dbReference>
<dbReference type="InterPro" id="IPR006599">
    <property type="entry name" value="CARP_motif"/>
</dbReference>
<dbReference type="InterPro" id="IPR036850">
    <property type="entry name" value="NDK-like_dom_sf"/>
</dbReference>
<dbReference type="InterPro" id="IPR012945">
    <property type="entry name" value="Tubulin-bd_cofactor_C_dom"/>
</dbReference>
<dbReference type="InterPro" id="IPR039093">
    <property type="entry name" value="XRP2"/>
</dbReference>
<dbReference type="PANTHER" id="PTHR15440:SF0">
    <property type="entry name" value="PROTEIN XRP2"/>
    <property type="match status" value="1"/>
</dbReference>
<dbReference type="PANTHER" id="PTHR15440">
    <property type="entry name" value="XRP2 PROTEIN"/>
    <property type="match status" value="1"/>
</dbReference>
<dbReference type="Pfam" id="PF07986">
    <property type="entry name" value="TBCC"/>
    <property type="match status" value="1"/>
</dbReference>
<dbReference type="PIRSF" id="PIRSF037947">
    <property type="entry name" value="Protein_XRP2"/>
    <property type="match status" value="1"/>
</dbReference>
<dbReference type="SMART" id="SM00673">
    <property type="entry name" value="CARP"/>
    <property type="match status" value="2"/>
</dbReference>
<dbReference type="SUPFAM" id="SSF69340">
    <property type="entry name" value="C-terminal domain of adenylylcyclase associated protein"/>
    <property type="match status" value="1"/>
</dbReference>
<dbReference type="SUPFAM" id="SSF54919">
    <property type="entry name" value="Nucleoside diphosphate kinase, NDK"/>
    <property type="match status" value="1"/>
</dbReference>
<dbReference type="PROSITE" id="PS51329">
    <property type="entry name" value="C_CAP_COFACTOR_C"/>
    <property type="match status" value="1"/>
</dbReference>
<dbReference type="PROSITE" id="PS51374">
    <property type="entry name" value="NDPK_LIKE"/>
    <property type="match status" value="1"/>
</dbReference>
<organism>
    <name type="scientific">Gallus gallus</name>
    <name type="common">Chicken</name>
    <dbReference type="NCBI Taxonomy" id="9031"/>
    <lineage>
        <taxon>Eukaryota</taxon>
        <taxon>Metazoa</taxon>
        <taxon>Chordata</taxon>
        <taxon>Craniata</taxon>
        <taxon>Vertebrata</taxon>
        <taxon>Euteleostomi</taxon>
        <taxon>Archelosauria</taxon>
        <taxon>Archosauria</taxon>
        <taxon>Dinosauria</taxon>
        <taxon>Saurischia</taxon>
        <taxon>Theropoda</taxon>
        <taxon>Coelurosauria</taxon>
        <taxon>Aves</taxon>
        <taxon>Neognathae</taxon>
        <taxon>Galloanserae</taxon>
        <taxon>Galliformes</taxon>
        <taxon>Phasianidae</taxon>
        <taxon>Phasianinae</taxon>
        <taxon>Gallus</taxon>
    </lineage>
</organism>
<evidence type="ECO:0000250" key="1"/>
<evidence type="ECO:0000250" key="2">
    <source>
        <dbReference type="UniProtKB" id="O75695"/>
    </source>
</evidence>
<evidence type="ECO:0000255" key="3"/>
<evidence type="ECO:0000255" key="4">
    <source>
        <dbReference type="PROSITE-ProRule" id="PRU00659"/>
    </source>
</evidence>
<evidence type="ECO:0000256" key="5">
    <source>
        <dbReference type="SAM" id="MobiDB-lite"/>
    </source>
</evidence>
<evidence type="ECO:0000305" key="6"/>
<feature type="initiator methionine" description="Removed" evidence="3">
    <location>
        <position position="1"/>
    </location>
</feature>
<feature type="chain" id="PRO_0000235805" description="Protein XRP2">
    <location>
        <begin position="2"/>
        <end position="357"/>
    </location>
</feature>
<feature type="domain" description="C-CAP/cofactor C-like" evidence="4">
    <location>
        <begin position="32"/>
        <end position="186"/>
    </location>
</feature>
<feature type="region of interest" description="Disordered" evidence="5">
    <location>
        <begin position="1"/>
        <end position="39"/>
    </location>
</feature>
<feature type="compositionally biased region" description="Basic residues" evidence="5">
    <location>
        <begin position="1"/>
        <end position="11"/>
    </location>
</feature>
<feature type="compositionally biased region" description="Low complexity" evidence="5">
    <location>
        <begin position="12"/>
        <end position="25"/>
    </location>
</feature>
<feature type="binding site" evidence="1">
    <location>
        <begin position="105"/>
        <end position="106"/>
    </location>
    <ligand>
        <name>GTP</name>
        <dbReference type="ChEBI" id="CHEBI:37565"/>
    </ligand>
</feature>
<feature type="binding site" evidence="1">
    <location>
        <begin position="122"/>
        <end position="125"/>
    </location>
    <ligand>
        <name>GTP</name>
        <dbReference type="ChEBI" id="CHEBI:37565"/>
    </ligand>
</feature>
<feature type="lipid moiety-binding region" description="N-myristoyl glycine" evidence="3">
    <location>
        <position position="2"/>
    </location>
</feature>
<feature type="lipid moiety-binding region" description="S-palmitoyl cysteine" evidence="3">
    <location>
        <position position="3"/>
    </location>
</feature>
<protein>
    <recommendedName>
        <fullName>Protein XRP2</fullName>
    </recommendedName>
</protein>
<reference key="1">
    <citation type="journal article" date="2005" name="Genome Biol.">
        <title>Full-length cDNAs from chicken bursal lymphocytes to facilitate gene function analysis.</title>
        <authorList>
            <person name="Caldwell R.B."/>
            <person name="Kierzek A.M."/>
            <person name="Arakawa H."/>
            <person name="Bezzubov Y."/>
            <person name="Zaim J."/>
            <person name="Fiedler P."/>
            <person name="Kutter S."/>
            <person name="Blagodatski A."/>
            <person name="Kostovska D."/>
            <person name="Koter M."/>
            <person name="Plachy J."/>
            <person name="Carninci P."/>
            <person name="Hayashizaki Y."/>
            <person name="Buerstedde J.-M."/>
        </authorList>
    </citation>
    <scope>NUCLEOTIDE SEQUENCE [LARGE SCALE MRNA]</scope>
    <source>
        <strain>CB</strain>
        <tissue>Bursa of Fabricius</tissue>
    </source>
</reference>
<sequence>MGCFFSKRRKPAQGGQQQGASQEPAAGEEKAPQYSWDQRAKVDPKDYTFSGLKDETVGRLPGRVAGQQFVIQDCENCSIYIFDHSATVTIDDCVNCQIFLGPIKGSVFFRNCKDCKCIVACQQFRTRDCRRLEVFLCCATQPIIESSTGMKFGCFQYYYPELALQFKDAGLSIFNNTWSNIHDFTPVSGENNWGLLPENAVVQDYVPLPASEELKAVRVSTDAMKSIIPITRGQRQKNSDESCLAVFFAGDYTTANARKLIDEMTGKGFQLVQTKEVSMKAEDAQRVFQQCASEFIPLLERGPVVALEFNGDGAVEGCRNTVNDVFNGTKVFVSESKASASQDVDNFYNFADMQMGM</sequence>
<keyword id="KW-1003">Cell membrane</keyword>
<keyword id="KW-0342">GTP-binding</keyword>
<keyword id="KW-0343">GTPase activation</keyword>
<keyword id="KW-0449">Lipoprotein</keyword>
<keyword id="KW-0472">Membrane</keyword>
<keyword id="KW-0519">Myristate</keyword>
<keyword id="KW-0547">Nucleotide-binding</keyword>
<keyword id="KW-0564">Palmitate</keyword>
<keyword id="KW-1185">Reference proteome</keyword>
<name>XRP2_CHICK</name>
<gene>
    <name type="primary">RP2</name>
    <name type="ORF">RCJMB04_35c24</name>
</gene>
<proteinExistence type="evidence at transcript level"/>
<accession>Q5ZHN4</accession>